<gene>
    <name type="primary">yajC</name>
    <name type="ordered locus">TC_0117</name>
</gene>
<evidence type="ECO:0000250" key="1">
    <source>
        <dbReference type="UniProtKB" id="P0ADZ7"/>
    </source>
</evidence>
<evidence type="ECO:0000255" key="2"/>
<evidence type="ECO:0000305" key="3"/>
<sequence length="114" mass="12754">MFSRVLFSILFFLGCCPSLFADVDSPQRATFGQPAVMLGIAIVFFYFILWRPEQKRRQAMEKRKSELAVGDKVTAMGIVGTIAEIREHTVVLNIASGKIEILKAAISEIFKAEK</sequence>
<reference key="1">
    <citation type="journal article" date="2000" name="Nucleic Acids Res.">
        <title>Genome sequences of Chlamydia trachomatis MoPn and Chlamydia pneumoniae AR39.</title>
        <authorList>
            <person name="Read T.D."/>
            <person name="Brunham R.C."/>
            <person name="Shen C."/>
            <person name="Gill S.R."/>
            <person name="Heidelberg J.F."/>
            <person name="White O."/>
            <person name="Hickey E.K."/>
            <person name="Peterson J.D."/>
            <person name="Utterback T.R."/>
            <person name="Berry K.J."/>
            <person name="Bass S."/>
            <person name="Linher K.D."/>
            <person name="Weidman J.F."/>
            <person name="Khouri H.M."/>
            <person name="Craven B."/>
            <person name="Bowman C."/>
            <person name="Dodson R.J."/>
            <person name="Gwinn M.L."/>
            <person name="Nelson W.C."/>
            <person name="DeBoy R.T."/>
            <person name="Kolonay J.F."/>
            <person name="McClarty G."/>
            <person name="Salzberg S.L."/>
            <person name="Eisen J.A."/>
            <person name="Fraser C.M."/>
        </authorList>
    </citation>
    <scope>NUCLEOTIDE SEQUENCE [LARGE SCALE GENOMIC DNA]</scope>
    <source>
        <strain>MoPn / Nigg</strain>
    </source>
</reference>
<proteinExistence type="inferred from homology"/>
<keyword id="KW-0997">Cell inner membrane</keyword>
<keyword id="KW-1003">Cell membrane</keyword>
<keyword id="KW-0472">Membrane</keyword>
<keyword id="KW-0653">Protein transport</keyword>
<keyword id="KW-0811">Translocation</keyword>
<keyword id="KW-0812">Transmembrane</keyword>
<keyword id="KW-1133">Transmembrane helix</keyword>
<keyword id="KW-0813">Transport</keyword>
<comment type="function">
    <text evidence="1">The SecYEG-SecDF-YajC-YidC holo-translocon (HTL) protein secretase/insertase is a supercomplex required for protein secretion, insertion of proteins into membranes, and assembly of membrane protein complexes. While the SecYEG complex is essential for assembly of a number of proteins and complexes, the SecDF-YajC-YidC subcomplex facilitates these functions.</text>
</comment>
<comment type="subunit">
    <text evidence="1">Part of the SecDF-YidC-YajC translocase complex. The SecDF-YidC-YajC translocase forms a supercomplex with SecYEG, called the holo-translocon (HTL).</text>
</comment>
<comment type="subcellular location">
    <subcellularLocation>
        <location evidence="1">Cell inner membrane</location>
        <topology evidence="1">Single-pass membrane protein</topology>
    </subcellularLocation>
</comment>
<comment type="similarity">
    <text evidence="3">Belongs to the YajC family.</text>
</comment>
<organism>
    <name type="scientific">Chlamydia muridarum (strain MoPn / Nigg)</name>
    <dbReference type="NCBI Taxonomy" id="243161"/>
    <lineage>
        <taxon>Bacteria</taxon>
        <taxon>Pseudomonadati</taxon>
        <taxon>Chlamydiota</taxon>
        <taxon>Chlamydiia</taxon>
        <taxon>Chlamydiales</taxon>
        <taxon>Chlamydiaceae</taxon>
        <taxon>Chlamydia/Chlamydophila group</taxon>
        <taxon>Chlamydia</taxon>
    </lineage>
</organism>
<accession>Q9PLI2</accession>
<name>YAJC_CHLMU</name>
<protein>
    <recommendedName>
        <fullName>Sec translocon accessory complex subunit YajC</fullName>
    </recommendedName>
</protein>
<feature type="chain" id="PRO_0000097029" description="Sec translocon accessory complex subunit YajC">
    <location>
        <begin position="1"/>
        <end position="114"/>
    </location>
</feature>
<feature type="transmembrane region" description="Helical" evidence="2">
    <location>
        <begin position="30"/>
        <end position="50"/>
    </location>
</feature>
<dbReference type="EMBL" id="AE002160">
    <property type="protein sequence ID" value="AAF38996.1"/>
    <property type="molecule type" value="Genomic_DNA"/>
</dbReference>
<dbReference type="PIR" id="A81739">
    <property type="entry name" value="A81739"/>
</dbReference>
<dbReference type="RefSeq" id="WP_010229432.1">
    <property type="nucleotide sequence ID" value="NZ_CP063055.1"/>
</dbReference>
<dbReference type="SMR" id="Q9PLI2"/>
<dbReference type="GeneID" id="1245651"/>
<dbReference type="KEGG" id="cmu:TC_0117"/>
<dbReference type="eggNOG" id="COG1862">
    <property type="taxonomic scope" value="Bacteria"/>
</dbReference>
<dbReference type="HOGENOM" id="CLU_116157_2_2_0"/>
<dbReference type="OrthoDB" id="9800132at2"/>
<dbReference type="Proteomes" id="UP000000800">
    <property type="component" value="Chromosome"/>
</dbReference>
<dbReference type="GO" id="GO:0005886">
    <property type="term" value="C:plasma membrane"/>
    <property type="evidence" value="ECO:0007669"/>
    <property type="project" value="UniProtKB-SubCell"/>
</dbReference>
<dbReference type="GO" id="GO:0015031">
    <property type="term" value="P:protein transport"/>
    <property type="evidence" value="ECO:0007669"/>
    <property type="project" value="UniProtKB-KW"/>
</dbReference>
<dbReference type="InterPro" id="IPR003849">
    <property type="entry name" value="Preprotein_translocase_YajC"/>
</dbReference>
<dbReference type="NCBIfam" id="TIGR00739">
    <property type="entry name" value="yajC"/>
    <property type="match status" value="1"/>
</dbReference>
<dbReference type="PANTHER" id="PTHR33909">
    <property type="entry name" value="SEC TRANSLOCON ACCESSORY COMPLEX SUBUNIT YAJC"/>
    <property type="match status" value="1"/>
</dbReference>
<dbReference type="PANTHER" id="PTHR33909:SF1">
    <property type="entry name" value="SEC TRANSLOCON ACCESSORY COMPLEX SUBUNIT YAJC"/>
    <property type="match status" value="1"/>
</dbReference>
<dbReference type="Pfam" id="PF02699">
    <property type="entry name" value="YajC"/>
    <property type="match status" value="1"/>
</dbReference>
<dbReference type="PRINTS" id="PR01853">
    <property type="entry name" value="YAJCTRNLCASE"/>
</dbReference>
<dbReference type="SMART" id="SM01323">
    <property type="entry name" value="YajC"/>
    <property type="match status" value="1"/>
</dbReference>